<keyword id="KW-0997">Cell inner membrane</keyword>
<keyword id="KW-1003">Cell membrane</keyword>
<keyword id="KW-0328">Glycosyltransferase</keyword>
<keyword id="KW-0448">Lipopolysaccharide biosynthesis</keyword>
<keyword id="KW-0460">Magnesium</keyword>
<keyword id="KW-0464">Manganese</keyword>
<keyword id="KW-0472">Membrane</keyword>
<keyword id="KW-1185">Reference proteome</keyword>
<keyword id="KW-0808">Transferase</keyword>
<keyword id="KW-0812">Transmembrane</keyword>
<keyword id="KW-1133">Transmembrane helix</keyword>
<comment type="function">
    <text evidence="3 6 7 8">Catalyzes the transfer of the GlcNAc-1-phosphate moiety from UDP-GlcNAc onto the carrier lipid undecaprenyl phosphate (C55-P), yielding GlcNAc-pyrophosphoryl-undecaprenyl (GlcNAc-PP-C55). It is the first lipid-linked intermediate involved in enterobacterial common antigen (ECA) synthesis, and an acceptor for the addition of subsequent sugars to complete the biosynthesis of O-antigen lipopolysaccharide (LPS) in many E.coli O types. The apparent affinity of WecA for the polyisoprenyl phosphate substrates increases with the polyisoprenyl chain length. WecA is unable to utilize dolichyl phosphate (Dol-P).</text>
</comment>
<comment type="catalytic activity">
    <reaction evidence="2 6 8">
        <text>di-trans,octa-cis-undecaprenyl phosphate + UDP-N-acetyl-alpha-D-glucosamine = N-acetyl-alpha-D-glucosaminyl-di-trans,octa-cis-undecaprenyl diphosphate + UMP</text>
        <dbReference type="Rhea" id="RHEA:28090"/>
        <dbReference type="ChEBI" id="CHEBI:57705"/>
        <dbReference type="ChEBI" id="CHEBI:57865"/>
        <dbReference type="ChEBI" id="CHEBI:60392"/>
        <dbReference type="ChEBI" id="CHEBI:62959"/>
        <dbReference type="EC" id="2.7.8.33"/>
    </reaction>
</comment>
<comment type="cofactor">
    <cofactor evidence="2 6">
        <name>Mg(2+)</name>
        <dbReference type="ChEBI" id="CHEBI:18420"/>
    </cofactor>
</comment>
<comment type="cofactor">
    <cofactor evidence="2 6">
        <name>Mn(2+)</name>
        <dbReference type="ChEBI" id="CHEBI:29035"/>
    </cofactor>
</comment>
<comment type="activity regulation">
    <text>Inhibited by tunicamycin.</text>
</comment>
<comment type="biophysicochemical properties">
    <kinetics>
        <KM evidence="8">5.6 uM for UDP-GlcNAc</KM>
        <KM evidence="6">0.12 uM for UDP-GlcNAc (in the presence of Mg(2+))</KM>
        <KM evidence="6">0.19 uM for UDP-GlcNAc (in the presence of Mn(2+))</KM>
        <KM evidence="6">1.7 mM for Mg(2+)</KM>
        <KM evidence="6">0.3 mM for Mn(2+)</KM>
        <Vmax evidence="6">57.0 pmol/min/mg enzyme (in the presence of Mg(2+))</Vmax>
        <Vmax evidence="6">56.0 pmol/min/mg enzyme (in the presence of Mn(2+))</Vmax>
    </kinetics>
</comment>
<comment type="pathway">
    <text evidence="2 3">Bacterial outer membrane biogenesis; LPS O-antigen biosynthesis.</text>
</comment>
<comment type="pathway">
    <text evidence="2 7">Bacterial outer membrane biogenesis; enterobacterial common antigen biosynthesis.</text>
</comment>
<comment type="subcellular location">
    <subcellularLocation>
        <location evidence="2 3 5 6">Cell inner membrane</location>
        <topology evidence="2">Multi-pass membrane protein</topology>
    </subcellularLocation>
    <text evidence="6">Localizes to discrete regions in the plasma membrane.</text>
</comment>
<comment type="similarity">
    <text evidence="2 12">Belongs to the glycosyltransferase 4 family. WecA subfamily.</text>
</comment>
<comment type="sequence caution" evidence="12">
    <conflict type="erroneous initiation">
        <sequence resource="EMBL-CDS" id="AAA24526"/>
    </conflict>
    <text>Truncated N-terminus.</text>
</comment>
<comment type="sequence caution" evidence="12">
    <conflict type="erroneous initiation">
        <sequence resource="EMBL-CDS" id="AAB20842"/>
    </conflict>
    <text>Truncated N-terminus.</text>
</comment>
<sequence>MNLLTVSTDLISIFLFTTLFLFFARKVAKKVGLVDKPNFRKRHQGLIPLVGGISVYAGICFTFGIVDYYIPHASLYLACAGVLVFIGALDDRFDISVKIRATIQAAVGIVMMVFGKLYLSSLGYIFGSWEMVLGPFGYFLTLFAVWAAINAFNMVDGIDGLLGGLSCVSFAAIGMILWFDGQTSLAIWCFAMIAAILPYIMLNLGILGRRYKVFMGDAGSTLIGFTVIWILLETTQGKTHPISPVTALWIIAIPLMDMVAIMYRRLRKGMSPFSPDRQHIHHLIMRAGFTSRQAFVLITLAAALLASIGVLAEYSHFVPEWVMLVLFLLAFFLYGYCIKRAWKVARFIKRVKRRLRRNRGGSPNLTK</sequence>
<gene>
    <name evidence="2 9" type="primary">wecA</name>
    <name evidence="10" type="synonym">rfe</name>
    <name type="ordered locus">b3784</name>
    <name type="ordered locus">JW3758</name>
</gene>
<dbReference type="EC" id="2.7.8.33" evidence="2 6 8"/>
<dbReference type="EMBL" id="S75640">
    <property type="protein sequence ID" value="AAB20842.1"/>
    <property type="status" value="ALT_INIT"/>
    <property type="molecule type" value="Genomic_DNA"/>
</dbReference>
<dbReference type="EMBL" id="M76129">
    <property type="protein sequence ID" value="AAA24526.1"/>
    <property type="status" value="ALT_INIT"/>
    <property type="molecule type" value="Genomic_DNA"/>
</dbReference>
<dbReference type="EMBL" id="AF248031">
    <property type="protein sequence ID" value="AAG26342.1"/>
    <property type="molecule type" value="Genomic_DNA"/>
</dbReference>
<dbReference type="EMBL" id="M87049">
    <property type="protein sequence ID" value="AAA67584.1"/>
    <property type="molecule type" value="Genomic_DNA"/>
</dbReference>
<dbReference type="EMBL" id="U00096">
    <property type="protein sequence ID" value="AAC76789.1"/>
    <property type="molecule type" value="Genomic_DNA"/>
</dbReference>
<dbReference type="EMBL" id="AP009048">
    <property type="protein sequence ID" value="BAE77514.1"/>
    <property type="molecule type" value="Genomic_DNA"/>
</dbReference>
<dbReference type="PIR" id="C65182">
    <property type="entry name" value="C65182"/>
</dbReference>
<dbReference type="RefSeq" id="NP_418231.1">
    <property type="nucleotide sequence ID" value="NC_000913.3"/>
</dbReference>
<dbReference type="RefSeq" id="WP_001050960.1">
    <property type="nucleotide sequence ID" value="NZ_STEB01000021.1"/>
</dbReference>
<dbReference type="SMR" id="P0AC78"/>
<dbReference type="BioGRID" id="4263322">
    <property type="interactions" value="318"/>
</dbReference>
<dbReference type="DIP" id="DIP-48083N"/>
<dbReference type="FunCoup" id="P0AC78">
    <property type="interactions" value="409"/>
</dbReference>
<dbReference type="IntAct" id="P0AC78">
    <property type="interactions" value="1"/>
</dbReference>
<dbReference type="STRING" id="511145.b3784"/>
<dbReference type="TCDB" id="9.B.146.1.7">
    <property type="family name" value="the putative undecaprenyl-phosphate n-acetylglucosaminyl transferase (murg) family"/>
</dbReference>
<dbReference type="PaxDb" id="511145-b3784"/>
<dbReference type="DNASU" id="948789"/>
<dbReference type="EnsemblBacteria" id="AAC76789">
    <property type="protein sequence ID" value="AAC76789"/>
    <property type="gene ID" value="b3784"/>
</dbReference>
<dbReference type="GeneID" id="93778160"/>
<dbReference type="GeneID" id="948789"/>
<dbReference type="KEGG" id="ecj:JW3758"/>
<dbReference type="KEGG" id="eco:b3784"/>
<dbReference type="KEGG" id="ecoc:C3026_20490"/>
<dbReference type="PATRIC" id="fig|511145.12.peg.3900"/>
<dbReference type="EchoBASE" id="EB0833"/>
<dbReference type="eggNOG" id="COG0472">
    <property type="taxonomic scope" value="Bacteria"/>
</dbReference>
<dbReference type="HOGENOM" id="CLU_023982_1_0_6"/>
<dbReference type="InParanoid" id="P0AC78"/>
<dbReference type="OMA" id="MCLGFLP"/>
<dbReference type="OrthoDB" id="9783652at2"/>
<dbReference type="PhylomeDB" id="P0AC78"/>
<dbReference type="BioCyc" id="EcoCyc:GLCNACPTRANS-MONOMER"/>
<dbReference type="BioCyc" id="MetaCyc:GLCNACPTRANS-MONOMER"/>
<dbReference type="BRENDA" id="2.7.8.33">
    <property type="organism ID" value="2026"/>
</dbReference>
<dbReference type="BRENDA" id="2.7.8.35">
    <property type="organism ID" value="2026"/>
</dbReference>
<dbReference type="SABIO-RK" id="P0AC78"/>
<dbReference type="UniPathway" id="UPA00281"/>
<dbReference type="UniPathway" id="UPA00566"/>
<dbReference type="PRO" id="PR:P0AC78"/>
<dbReference type="Proteomes" id="UP000000625">
    <property type="component" value="Chromosome"/>
</dbReference>
<dbReference type="GO" id="GO:0009276">
    <property type="term" value="C:Gram-negative-bacterium-type cell wall"/>
    <property type="evidence" value="ECO:0000314"/>
    <property type="project" value="UniProtKB"/>
</dbReference>
<dbReference type="GO" id="GO:0016020">
    <property type="term" value="C:membrane"/>
    <property type="evidence" value="ECO:0000314"/>
    <property type="project" value="EcoCyc"/>
</dbReference>
<dbReference type="GO" id="GO:0005886">
    <property type="term" value="C:plasma membrane"/>
    <property type="evidence" value="ECO:0000314"/>
    <property type="project" value="EcoCyc"/>
</dbReference>
<dbReference type="GO" id="GO:0016757">
    <property type="term" value="F:glycosyltransferase activity"/>
    <property type="evidence" value="ECO:0007669"/>
    <property type="project" value="UniProtKB-KW"/>
</dbReference>
<dbReference type="GO" id="GO:0042802">
    <property type="term" value="F:identical protein binding"/>
    <property type="evidence" value="ECO:0000314"/>
    <property type="project" value="EcoCyc"/>
</dbReference>
<dbReference type="GO" id="GO:0000287">
    <property type="term" value="F:magnesium ion binding"/>
    <property type="evidence" value="ECO:0000314"/>
    <property type="project" value="UniProtKB"/>
</dbReference>
<dbReference type="GO" id="GO:0030145">
    <property type="term" value="F:manganese ion binding"/>
    <property type="evidence" value="ECO:0000314"/>
    <property type="project" value="UniProtKB"/>
</dbReference>
<dbReference type="GO" id="GO:0008963">
    <property type="term" value="F:phospho-N-acetylmuramoyl-pentapeptide-transferase activity"/>
    <property type="evidence" value="ECO:0000314"/>
    <property type="project" value="EcoliWiki"/>
</dbReference>
<dbReference type="GO" id="GO:0016780">
    <property type="term" value="F:phosphotransferase activity, for other substituted phosphate groups"/>
    <property type="evidence" value="ECO:0000314"/>
    <property type="project" value="UniProtKB"/>
</dbReference>
<dbReference type="GO" id="GO:0036380">
    <property type="term" value="F:UDP-N-acetylglucosamine-undecaprenyl-phosphate N-acetylglucosaminephosphotransferase activity"/>
    <property type="evidence" value="ECO:0007669"/>
    <property type="project" value="UniProtKB-UniRule"/>
</dbReference>
<dbReference type="GO" id="GO:0044038">
    <property type="term" value="P:cell wall macromolecule biosynthetic process"/>
    <property type="evidence" value="ECO:0000314"/>
    <property type="project" value="UniProtKB"/>
</dbReference>
<dbReference type="GO" id="GO:0071555">
    <property type="term" value="P:cell wall organization"/>
    <property type="evidence" value="ECO:0000314"/>
    <property type="project" value="UniProtKB"/>
</dbReference>
<dbReference type="GO" id="GO:0009246">
    <property type="term" value="P:enterobacterial common antigen biosynthetic process"/>
    <property type="evidence" value="ECO:0000315"/>
    <property type="project" value="EcoCyc"/>
</dbReference>
<dbReference type="GO" id="GO:0009103">
    <property type="term" value="P:lipopolysaccharide biosynthetic process"/>
    <property type="evidence" value="ECO:0000314"/>
    <property type="project" value="UniProtKB"/>
</dbReference>
<dbReference type="GO" id="GO:0009243">
    <property type="term" value="P:O antigen biosynthetic process"/>
    <property type="evidence" value="ECO:0007669"/>
    <property type="project" value="UniProtKB-UniRule"/>
</dbReference>
<dbReference type="CDD" id="cd06853">
    <property type="entry name" value="GT_WecA_like"/>
    <property type="match status" value="1"/>
</dbReference>
<dbReference type="HAMAP" id="MF_02030">
    <property type="entry name" value="WecA_Gammaproteo"/>
    <property type="match status" value="1"/>
</dbReference>
<dbReference type="InterPro" id="IPR012750">
    <property type="entry name" value="ECA_WecA-rel"/>
</dbReference>
<dbReference type="InterPro" id="IPR000715">
    <property type="entry name" value="Glycosyl_transferase_4"/>
</dbReference>
<dbReference type="NCBIfam" id="TIGR02380">
    <property type="entry name" value="ECA_wecA"/>
    <property type="match status" value="1"/>
</dbReference>
<dbReference type="PANTHER" id="PTHR22926">
    <property type="entry name" value="PHOSPHO-N-ACETYLMURAMOYL-PENTAPEPTIDE-TRANSFERASE"/>
    <property type="match status" value="1"/>
</dbReference>
<dbReference type="PANTHER" id="PTHR22926:SF3">
    <property type="entry name" value="UNDECAPRENYL-PHOSPHATE ALPHA-N-ACETYLGLUCOSAMINYL 1-PHOSPHATE TRANSFERASE"/>
    <property type="match status" value="1"/>
</dbReference>
<dbReference type="Pfam" id="PF00953">
    <property type="entry name" value="Glycos_transf_4"/>
    <property type="match status" value="1"/>
</dbReference>
<name>WECA_ECOLI</name>
<evidence type="ECO:0000255" key="1"/>
<evidence type="ECO:0000255" key="2">
    <source>
        <dbReference type="HAMAP-Rule" id="MF_02030"/>
    </source>
</evidence>
<evidence type="ECO:0000269" key="3">
    <source>
    </source>
</evidence>
<evidence type="ECO:0000269" key="4">
    <source>
    </source>
</evidence>
<evidence type="ECO:0000269" key="5">
    <source>
    </source>
</evidence>
<evidence type="ECO:0000269" key="6">
    <source>
    </source>
</evidence>
<evidence type="ECO:0000269" key="7">
    <source>
    </source>
</evidence>
<evidence type="ECO:0000269" key="8">
    <source>
    </source>
</evidence>
<evidence type="ECO:0000303" key="9">
    <source>
    </source>
</evidence>
<evidence type="ECO:0000303" key="10">
    <source>
    </source>
</evidence>
<evidence type="ECO:0000303" key="11">
    <source>
    </source>
</evidence>
<evidence type="ECO:0000305" key="12"/>
<evidence type="ECO:0000305" key="13">
    <source>
    </source>
</evidence>
<evidence type="ECO:0000305" key="14">
    <source>
    </source>
</evidence>
<feature type="chain" id="PRO_0000108941" description="Undecaprenyl-phosphate alpha-N-acetylglucosaminyl 1-phosphate transferase">
    <location>
        <begin position="1"/>
        <end position="367"/>
    </location>
</feature>
<feature type="topological domain" description="Periplasmic" evidence="12">
    <location>
        <begin position="1"/>
        <end position="2"/>
    </location>
</feature>
<feature type="transmembrane region" description="Helical" evidence="1">
    <location>
        <begin position="3"/>
        <end position="23"/>
    </location>
</feature>
<feature type="topological domain" description="Cytoplasmic" evidence="12">
    <location>
        <begin position="24"/>
        <end position="45"/>
    </location>
</feature>
<feature type="transmembrane region" description="Helical" evidence="1">
    <location>
        <begin position="46"/>
        <end position="66"/>
    </location>
</feature>
<feature type="topological domain" description="Periplasmic" evidence="12">
    <location>
        <begin position="67"/>
        <end position="68"/>
    </location>
</feature>
<feature type="transmembrane region" description="Helical" evidence="1">
    <location>
        <begin position="69"/>
        <end position="89"/>
    </location>
</feature>
<feature type="topological domain" description="Cytoplasmic" evidence="6">
    <location>
        <begin position="90"/>
        <end position="105"/>
    </location>
</feature>
<feature type="transmembrane region" description="Helical" evidence="1">
    <location>
        <begin position="106"/>
        <end position="126"/>
    </location>
</feature>
<feature type="topological domain" description="Periplasmic" evidence="12">
    <location>
        <begin position="127"/>
        <end position="131"/>
    </location>
</feature>
<feature type="transmembrane region" description="Helical" evidence="1">
    <location>
        <begin position="132"/>
        <end position="152"/>
    </location>
</feature>
<feature type="topological domain" description="Cytoplasmic" evidence="6">
    <location>
        <begin position="153"/>
        <end position="157"/>
    </location>
</feature>
<feature type="transmembrane region" description="Helical" evidence="1">
    <location>
        <begin position="158"/>
        <end position="178"/>
    </location>
</feature>
<feature type="topological domain" description="Periplasmic" evidence="12">
    <location>
        <begin position="179"/>
        <end position="186"/>
    </location>
</feature>
<feature type="transmembrane region" description="Helical" evidence="1">
    <location>
        <begin position="187"/>
        <end position="207"/>
    </location>
</feature>
<feature type="topological domain" description="Cytoplasmic" evidence="12">
    <location>
        <begin position="208"/>
        <end position="212"/>
    </location>
</feature>
<feature type="transmembrane region" description="Helical" evidence="1">
    <location>
        <begin position="213"/>
        <end position="233"/>
    </location>
</feature>
<feature type="topological domain" description="Periplasmic" evidence="12">
    <location>
        <begin position="234"/>
        <end position="241"/>
    </location>
</feature>
<feature type="transmembrane region" description="Helical" evidence="1">
    <location>
        <begin position="242"/>
        <end position="262"/>
    </location>
</feature>
<feature type="topological domain" description="Cytoplasmic" evidence="6">
    <location>
        <begin position="263"/>
        <end position="293"/>
    </location>
</feature>
<feature type="transmembrane region" description="Helical" evidence="1">
    <location>
        <begin position="294"/>
        <end position="314"/>
    </location>
</feature>
<feature type="topological domain" description="Periplasmic" evidence="12">
    <location>
        <begin position="315"/>
        <end position="317"/>
    </location>
</feature>
<feature type="transmembrane region" description="Helical" evidence="1">
    <location>
        <begin position="318"/>
        <end position="338"/>
    </location>
</feature>
<feature type="topological domain" description="Cytoplasmic" evidence="5 6">
    <location>
        <begin position="339"/>
        <end position="367"/>
    </location>
</feature>
<feature type="site" description="Important in orienting the substrate" evidence="13 14">
    <location>
        <position position="90"/>
    </location>
</feature>
<feature type="site" description="Important in orienting the substrate; probably interacts with magnesium or manganese" evidence="13 14">
    <location>
        <position position="91"/>
    </location>
</feature>
<feature type="site" description="Could be required for catalysis" evidence="13 14">
    <location>
        <position position="156"/>
    </location>
</feature>
<feature type="site" description="Could be required for catalysis" evidence="13 14">
    <location>
        <position position="159"/>
    </location>
</feature>
<feature type="mutagenesis site" description="Decrease in activity; both in vivo and in vitro." evidence="4">
    <original>D</original>
    <variation>G</variation>
    <location>
        <position position="35"/>
    </location>
</feature>
<feature type="mutagenesis site" description="Loss of activity in vivo. Decrease in activity in vitro. No change in binding to tunicamycin." evidence="4">
    <original>DD</original>
    <variation>EE</variation>
    <variation>GG</variation>
    <location>
        <begin position="90"/>
        <end position="91"/>
    </location>
</feature>
<feature type="mutagenesis site" description="Reduces slightly the velocity and shows a small increase of the affinity for the transferase." evidence="6">
    <original>D</original>
    <variation>E</variation>
    <variation>N</variation>
    <location>
        <position position="90"/>
    </location>
</feature>
<feature type="mutagenesis site" description="Reduces slightly the velocity and shows a small increase of the affinity for the transferase." evidence="6">
    <original>D</original>
    <variation>N</variation>
    <location>
        <position position="91"/>
    </location>
</feature>
<feature type="mutagenesis site" description="No loss in activity; both in vivo and in vitro." evidence="4">
    <original>D</original>
    <variation>G</variation>
    <location>
        <position position="94"/>
    </location>
</feature>
<feature type="mutagenesis site" description="Loss of activity." evidence="4 6">
    <original>D</original>
    <variation>E</variation>
    <variation>N</variation>
    <location>
        <position position="156"/>
    </location>
</feature>
<feature type="mutagenesis site" description="Loss of activity; both in vivo and in vitro; when associated with E-159." evidence="4 6">
    <original>D</original>
    <variation>E</variation>
    <location>
        <position position="156"/>
    </location>
</feature>
<feature type="mutagenesis site" description="Loss of activity; both in vivo and in vitro. No binding to tunicamycin; when associated with G-159." evidence="4 6">
    <original>D</original>
    <variation>G</variation>
    <location>
        <position position="156"/>
    </location>
</feature>
<feature type="mutagenesis site" description="The activity is detectable but drastically reduced." evidence="4 6">
    <original>D</original>
    <variation>E</variation>
    <variation>N</variation>
    <location>
        <position position="159"/>
    </location>
</feature>
<feature type="mutagenesis site" description="Loss of activity; both in vivo and in vitro; when associated with E-156." evidence="4 6">
    <original>D</original>
    <variation>E</variation>
    <location>
        <position position="159"/>
    </location>
</feature>
<feature type="mutagenesis site" description="Loss of activity; both in vivo and in vitro. No binding to tunicamycin; when associated with G-156." evidence="4 6">
    <original>D</original>
    <variation>G</variation>
    <location>
        <position position="159"/>
    </location>
</feature>
<feature type="mutagenesis site" description="Decrease in activity. Reduces binding to tunicamycin." evidence="3">
    <original>R</original>
    <variation>K</variation>
    <location>
        <position position="265"/>
    </location>
</feature>
<feature type="mutagenesis site" description="No loss of activity; both in vivo and in vitro." evidence="4">
    <original>D</original>
    <variation>G</variation>
    <location>
        <position position="276"/>
    </location>
</feature>
<feature type="mutagenesis site" description="Loss of activity. No binding to tunicamycin." evidence="3">
    <original>HIHH</original>
    <variation>GGGG</variation>
    <location>
        <begin position="279"/>
        <end position="282"/>
    </location>
</feature>
<feature type="mutagenesis site" description="Loss of activity. No binding to tunicamycin." evidence="3">
    <original>H</original>
    <variation>S</variation>
    <location>
        <position position="279"/>
    </location>
</feature>
<feature type="sequence conflict" description="In Ref. 1; AAB20842." evidence="12" ref="1">
    <original>T</original>
    <variation>I</variation>
    <location>
        <position position="8"/>
    </location>
</feature>
<feature type="sequence conflict" description="In Ref. 1; AAB20842." evidence="12" ref="1">
    <original>A</original>
    <variation>V</variation>
    <location>
        <position position="73"/>
    </location>
</feature>
<feature type="sequence conflict" description="In Ref. 3; AAG26342." evidence="12" ref="3">
    <original>K</original>
    <variation>N</variation>
    <location>
        <position position="116"/>
    </location>
</feature>
<proteinExistence type="evidence at protein level"/>
<reference key="1">
    <citation type="journal article" date="1991" name="Mol. Microbiol.">
        <title>Cloning and expression of the rfe-rff gene cluster of Escherichia coli.</title>
        <authorList>
            <person name="Ohta M."/>
            <person name="Ina K."/>
            <person name="Kusuzaki K."/>
            <person name="Kido N."/>
            <person name="Arakawa Y."/>
            <person name="Kato N."/>
        </authorList>
    </citation>
    <scope>NUCLEOTIDE SEQUENCE [GENOMIC DNA]</scope>
</reference>
<reference key="2">
    <citation type="journal article" date="1992" name="J. Biol. Chem.">
        <title>Nucleotide sequence of the Escherichia coli rfe gene involved in the synthesis of enterobacterial common antigen. Molecular cloning of the rfe-rff gene cluster.</title>
        <authorList>
            <person name="Meier-Dieter U."/>
            <person name="Barr K."/>
            <person name="Starman R."/>
            <person name="Hatch L."/>
            <person name="Rick P.D."/>
        </authorList>
    </citation>
    <scope>NUCLEOTIDE SEQUENCE [GENOMIC DNA]</scope>
    <scope>FUNCTION IN ECA BIOSYNTHESIS</scope>
    <scope>PATHWAY</scope>
    <source>
        <strain>K12</strain>
        <strain>O8:K27</strain>
    </source>
</reference>
<reference key="3">
    <citation type="journal article" date="2000" name="FEMS Microbiol. Lett.">
        <title>Conserved cytoplasmic motifs that distinguish sub-groups of the polyprenol phosphate:N-acetylhexosamine-1-phosphate transferase family.</title>
        <authorList>
            <person name="Anderson M.S."/>
            <person name="Eveland S.S."/>
            <person name="Price N.P.J."/>
        </authorList>
    </citation>
    <scope>NUCLEOTIDE SEQUENCE [GENOMIC DNA]</scope>
    <source>
        <strain>K12 / MB2884</strain>
    </source>
</reference>
<reference key="4">
    <citation type="journal article" date="1992" name="Science">
        <title>Analysis of the Escherichia coli genome: DNA sequence of the region from 84.5 to 86.5 minutes.</title>
        <authorList>
            <person name="Daniels D.L."/>
            <person name="Plunkett G. III"/>
            <person name="Burland V.D."/>
            <person name="Blattner F.R."/>
        </authorList>
    </citation>
    <scope>NUCLEOTIDE SEQUENCE [LARGE SCALE GENOMIC DNA]</scope>
    <source>
        <strain>K12 / MG1655 / ATCC 47076</strain>
    </source>
</reference>
<reference key="5">
    <citation type="journal article" date="1997" name="Science">
        <title>The complete genome sequence of Escherichia coli K-12.</title>
        <authorList>
            <person name="Blattner F.R."/>
            <person name="Plunkett G. III"/>
            <person name="Bloch C.A."/>
            <person name="Perna N.T."/>
            <person name="Burland V."/>
            <person name="Riley M."/>
            <person name="Collado-Vides J."/>
            <person name="Glasner J.D."/>
            <person name="Rode C.K."/>
            <person name="Mayhew G.F."/>
            <person name="Gregor J."/>
            <person name="Davis N.W."/>
            <person name="Kirkpatrick H.A."/>
            <person name="Goeden M.A."/>
            <person name="Rose D.J."/>
            <person name="Mau B."/>
            <person name="Shao Y."/>
        </authorList>
    </citation>
    <scope>NUCLEOTIDE SEQUENCE [LARGE SCALE GENOMIC DNA]</scope>
    <source>
        <strain>K12 / MG1655 / ATCC 47076</strain>
    </source>
</reference>
<reference key="6">
    <citation type="journal article" date="2006" name="Mol. Syst. Biol.">
        <title>Highly accurate genome sequences of Escherichia coli K-12 strains MG1655 and W3110.</title>
        <authorList>
            <person name="Hayashi K."/>
            <person name="Morooka N."/>
            <person name="Yamamoto Y."/>
            <person name="Fujita K."/>
            <person name="Isono K."/>
            <person name="Choi S."/>
            <person name="Ohtsubo E."/>
            <person name="Baba T."/>
            <person name="Wanner B.L."/>
            <person name="Mori H."/>
            <person name="Horiuchi T."/>
        </authorList>
    </citation>
    <scope>NUCLEOTIDE SEQUENCE [LARGE SCALE GENOMIC DNA]</scope>
    <source>
        <strain>K12 / W3110 / ATCC 27325 / DSM 5911</strain>
    </source>
</reference>
<reference key="7">
    <citation type="journal article" date="1997" name="Glycobiology">
        <title>Polyisoprenyl phosphate specificity of UDP-GlcNAc:undecaprenyl phosphate N-acetylglucosaminyl 1-P transferase from E.coli.</title>
        <authorList>
            <person name="Rush J.S."/>
            <person name="Rick P.D."/>
            <person name="Waechter C.J."/>
        </authorList>
    </citation>
    <scope>FUNCTION</scope>
    <scope>CATALYTIC ACTIVITY</scope>
    <scope>BIOPHYSICOCHEMICAL PROPERTIES</scope>
    <scope>SUBSTRATE SPECIFICITY</scope>
</reference>
<reference key="8">
    <citation type="journal article" date="2000" name="J. Bacteriol.">
        <title>The N-terminal region of the Escherichia coli WecA (Rfe) protein, containing three predicted transmembrane helices, is required for function but not for membrane insertion.</title>
        <authorList>
            <person name="Amer A.O."/>
            <person name="Valvano M.A."/>
        </authorList>
    </citation>
    <scope>IDENTIFICATION OF START CODON</scope>
</reference>
<reference key="9">
    <citation type="journal article" date="2001" name="Microbiology">
        <title>Conserved amino acid residues found in a predicted cytosolic domain of the lipopolysaccharide biosynthetic protein WecA are implicated in the recognition of UDP-N-acetylglucosamine.</title>
        <authorList>
            <person name="Amer A.O."/>
            <person name="Valvano M.A."/>
        </authorList>
    </citation>
    <scope>FUNCTION IN LPS O-ANTIGEN BIOSYNTHESIS</scope>
    <scope>SUBCELLULAR LOCATION</scope>
    <scope>PATHWAY</scope>
    <scope>MUTAGENESIS OF ARG-265; HIS-279 AND 279-HIS--HIS-282</scope>
</reference>
<reference key="10">
    <citation type="journal article" date="2002" name="Microbiology">
        <title>Conserved aspartic acids are essential for the enzymic activity of the WecA protein initiating the biosynthesis of O-specific lipopolysaccharide and enterobacterial common antigen in Escherichia coli.</title>
        <authorList>
            <person name="Amer A.O."/>
            <person name="Valvano M.A."/>
        </authorList>
    </citation>
    <scope>MUTAGENESIS OF ASP-35; 90-ASP-ASP-91; ASP-94; ASP-156; 156-ASP--ASP-159; ASP-159 AND ASP-276</scope>
</reference>
<reference key="11">
    <citation type="journal article" date="2005" name="Science">
        <title>Global topology analysis of the Escherichia coli inner membrane proteome.</title>
        <authorList>
            <person name="Daley D.O."/>
            <person name="Rapp M."/>
            <person name="Granseth E."/>
            <person name="Melen K."/>
            <person name="Drew D."/>
            <person name="von Heijne G."/>
        </authorList>
    </citation>
    <scope>TOPOLOGY [LARGE SCALE ANALYSIS]</scope>
    <source>
        <strain>K12 / MG1655 / ATCC 47076</strain>
    </source>
</reference>
<reference key="12">
    <citation type="journal article" date="2007" name="J. Bacteriol.">
        <title>Functional characterization and membrane topology of Escherichia coli WecA, a sugar-phosphate transferase initiating the biosynthesis of enterobacterial common antigen and O-antigen lipopolysaccharide.</title>
        <authorList>
            <person name="Lehrer J."/>
            <person name="Vigeant K.A."/>
            <person name="Tatar L.D."/>
            <person name="Valvano M.A."/>
        </authorList>
    </citation>
    <scope>FUNCTION</scope>
    <scope>CATALYTIC ACTIVITY</scope>
    <scope>COFACTOR</scope>
    <scope>BIOPHYSICOCHEMICAL PROPERTIES</scope>
    <scope>SUBCELLULAR LOCATION</scope>
    <scope>TOPOLOGY</scope>
    <scope>MUTAGENESIS OF ASP-90; ASP-91; ASP-156 AND ASP-159</scope>
</reference>
<accession>P0AC78</accession>
<accession>P24235</accession>
<accession>P76751</accession>
<accession>Q2M892</accession>
<accession>Q9F8C8</accession>
<protein>
    <recommendedName>
        <fullName evidence="2 12">Undecaprenyl-phosphate alpha-N-acetylglucosaminyl 1-phosphate transferase</fullName>
        <ecNumber evidence="2 6 8">2.7.8.33</ecNumber>
    </recommendedName>
    <alternativeName>
        <fullName evidence="2 11">UDP-GlcNAc:undecaprenyl-phosphate GlcNAc-1-phosphate transferase</fullName>
    </alternativeName>
    <alternativeName>
        <fullName evidence="2">Undecaprenyl-phosphate GlcNAc-1-phosphate transferase</fullName>
    </alternativeName>
</protein>
<organism>
    <name type="scientific">Escherichia coli (strain K12)</name>
    <dbReference type="NCBI Taxonomy" id="83333"/>
    <lineage>
        <taxon>Bacteria</taxon>
        <taxon>Pseudomonadati</taxon>
        <taxon>Pseudomonadota</taxon>
        <taxon>Gammaproteobacteria</taxon>
        <taxon>Enterobacterales</taxon>
        <taxon>Enterobacteriaceae</taxon>
        <taxon>Escherichia</taxon>
    </lineage>
</organism>